<evidence type="ECO:0000250" key="1"/>
<evidence type="ECO:0000305" key="2"/>
<organism>
    <name type="scientific">Dictyostelium discoideum</name>
    <name type="common">Social amoeba</name>
    <dbReference type="NCBI Taxonomy" id="44689"/>
    <lineage>
        <taxon>Eukaryota</taxon>
        <taxon>Amoebozoa</taxon>
        <taxon>Evosea</taxon>
        <taxon>Eumycetozoa</taxon>
        <taxon>Dictyostelia</taxon>
        <taxon>Dictyosteliales</taxon>
        <taxon>Dictyosteliaceae</taxon>
        <taxon>Dictyostelium</taxon>
    </lineage>
</organism>
<name>RPB11_DICDI</name>
<keyword id="KW-0240">DNA-directed RNA polymerase</keyword>
<keyword id="KW-0539">Nucleus</keyword>
<keyword id="KW-1185">Reference proteome</keyword>
<keyword id="KW-0804">Transcription</keyword>
<gene>
    <name type="primary">polr2j</name>
    <name type="synonym">rpb11</name>
    <name type="ORF">DDB_G0277677</name>
</gene>
<proteinExistence type="inferred from homology"/>
<reference key="1">
    <citation type="journal article" date="2002" name="Nature">
        <title>Sequence and analysis of chromosome 2 of Dictyostelium discoideum.</title>
        <authorList>
            <person name="Gloeckner G."/>
            <person name="Eichinger L."/>
            <person name="Szafranski K."/>
            <person name="Pachebat J.A."/>
            <person name="Bankier A.T."/>
            <person name="Dear P.H."/>
            <person name="Lehmann R."/>
            <person name="Baumgart C."/>
            <person name="Parra G."/>
            <person name="Abril J.F."/>
            <person name="Guigo R."/>
            <person name="Kumpf K."/>
            <person name="Tunggal B."/>
            <person name="Cox E.C."/>
            <person name="Quail M.A."/>
            <person name="Platzer M."/>
            <person name="Rosenthal A."/>
            <person name="Noegel A.A."/>
        </authorList>
    </citation>
    <scope>NUCLEOTIDE SEQUENCE [LARGE SCALE GENOMIC DNA]</scope>
    <source>
        <strain>AX4</strain>
    </source>
</reference>
<reference key="2">
    <citation type="journal article" date="2005" name="Nature">
        <title>The genome of the social amoeba Dictyostelium discoideum.</title>
        <authorList>
            <person name="Eichinger L."/>
            <person name="Pachebat J.A."/>
            <person name="Gloeckner G."/>
            <person name="Rajandream M.A."/>
            <person name="Sucgang R."/>
            <person name="Berriman M."/>
            <person name="Song J."/>
            <person name="Olsen R."/>
            <person name="Szafranski K."/>
            <person name="Xu Q."/>
            <person name="Tunggal B."/>
            <person name="Kummerfeld S."/>
            <person name="Madera M."/>
            <person name="Konfortov B.A."/>
            <person name="Rivero F."/>
            <person name="Bankier A.T."/>
            <person name="Lehmann R."/>
            <person name="Hamlin N."/>
            <person name="Davies R."/>
            <person name="Gaudet P."/>
            <person name="Fey P."/>
            <person name="Pilcher K."/>
            <person name="Chen G."/>
            <person name="Saunders D."/>
            <person name="Sodergren E.J."/>
            <person name="Davis P."/>
            <person name="Kerhornou A."/>
            <person name="Nie X."/>
            <person name="Hall N."/>
            <person name="Anjard C."/>
            <person name="Hemphill L."/>
            <person name="Bason N."/>
            <person name="Farbrother P."/>
            <person name="Desany B."/>
            <person name="Just E."/>
            <person name="Morio T."/>
            <person name="Rost R."/>
            <person name="Churcher C.M."/>
            <person name="Cooper J."/>
            <person name="Haydock S."/>
            <person name="van Driessche N."/>
            <person name="Cronin A."/>
            <person name="Goodhead I."/>
            <person name="Muzny D.M."/>
            <person name="Mourier T."/>
            <person name="Pain A."/>
            <person name="Lu M."/>
            <person name="Harper D."/>
            <person name="Lindsay R."/>
            <person name="Hauser H."/>
            <person name="James K.D."/>
            <person name="Quiles M."/>
            <person name="Madan Babu M."/>
            <person name="Saito T."/>
            <person name="Buchrieser C."/>
            <person name="Wardroper A."/>
            <person name="Felder M."/>
            <person name="Thangavelu M."/>
            <person name="Johnson D."/>
            <person name="Knights A."/>
            <person name="Loulseged H."/>
            <person name="Mungall K.L."/>
            <person name="Oliver K."/>
            <person name="Price C."/>
            <person name="Quail M.A."/>
            <person name="Urushihara H."/>
            <person name="Hernandez J."/>
            <person name="Rabbinowitsch E."/>
            <person name="Steffen D."/>
            <person name="Sanders M."/>
            <person name="Ma J."/>
            <person name="Kohara Y."/>
            <person name="Sharp S."/>
            <person name="Simmonds M.N."/>
            <person name="Spiegler S."/>
            <person name="Tivey A."/>
            <person name="Sugano S."/>
            <person name="White B."/>
            <person name="Walker D."/>
            <person name="Woodward J.R."/>
            <person name="Winckler T."/>
            <person name="Tanaka Y."/>
            <person name="Shaulsky G."/>
            <person name="Schleicher M."/>
            <person name="Weinstock G.M."/>
            <person name="Rosenthal A."/>
            <person name="Cox E.C."/>
            <person name="Chisholm R.L."/>
            <person name="Gibbs R.A."/>
            <person name="Loomis W.F."/>
            <person name="Platzer M."/>
            <person name="Kay R.R."/>
            <person name="Williams J.G."/>
            <person name="Dear P.H."/>
            <person name="Noegel A.A."/>
            <person name="Barrell B.G."/>
            <person name="Kuspa A."/>
        </authorList>
    </citation>
    <scope>NUCLEOTIDE SEQUENCE [LARGE SCALE GENOMIC DNA]</scope>
    <source>
        <strain>AX4</strain>
    </source>
</reference>
<comment type="function">
    <text evidence="1">DNA-dependent RNA polymerase catalyzes the transcription of DNA into RNA using the four ribonucleoside triphosphates as substrates. Component of RNA polymerase II which synthesizes mRNA precursors and many functional non-coding RNAs. Pol II is the central component of the basal RNA polymerase II transcription machinery. It is composed of mobile elements that move relative to each other. RPB11 is part of the core element with the central large cleft (By similarity).</text>
</comment>
<comment type="subunit">
    <text evidence="1">Component of the RNA polymerase II (Pol II) complex consisting of 12 subunits.</text>
</comment>
<comment type="subcellular location">
    <subcellularLocation>
        <location evidence="1">Nucleus</location>
    </subcellularLocation>
</comment>
<comment type="similarity">
    <text evidence="2">Belongs to the archaeal Rpo11/eukaryotic RPB11/RPC19 RNA polymerase subunit family.</text>
</comment>
<feature type="chain" id="PRO_0000328750" description="DNA-directed RNA polymerase II subunit rpb11">
    <location>
        <begin position="1"/>
        <end position="120"/>
    </location>
</feature>
<accession>Q86JJ5</accession>
<accession>Q54ZA7</accession>
<protein>
    <recommendedName>
        <fullName>DNA-directed RNA polymerase II subunit rpb11</fullName>
        <shortName>RNA polymerase II subunit B11</shortName>
    </recommendedName>
    <alternativeName>
        <fullName>DNA-directed RNA polymerase II subunit J</fullName>
    </alternativeName>
</protein>
<sequence>MNAPDRFELFVLPDGAKKVTMVRDTKIPNASMFTILKEDHTIGNLIRMQLIADQDIIFAGYRMPHPLEHNVNIRIQTNNNTNPLECVQKSMECLSREFTSLENSFIEQVQKKRNVADQYI</sequence>
<dbReference type="EMBL" id="AAFI02000021">
    <property type="protein sequence ID" value="EAL68596.2"/>
    <property type="molecule type" value="Genomic_DNA"/>
</dbReference>
<dbReference type="RefSeq" id="XP_642530.2">
    <property type="nucleotide sequence ID" value="XM_637438.2"/>
</dbReference>
<dbReference type="SMR" id="Q86JJ5"/>
<dbReference type="FunCoup" id="Q86JJ5">
    <property type="interactions" value="443"/>
</dbReference>
<dbReference type="STRING" id="44689.Q86JJ5"/>
<dbReference type="PaxDb" id="44689-DDB0216285"/>
<dbReference type="EnsemblProtists" id="EAL68596">
    <property type="protein sequence ID" value="EAL68596"/>
    <property type="gene ID" value="DDB_G0277677"/>
</dbReference>
<dbReference type="GeneID" id="8621156"/>
<dbReference type="KEGG" id="ddi:DDB_G0277677"/>
<dbReference type="dictyBase" id="DDB_G0277677">
    <property type="gene designation" value="rpb11"/>
</dbReference>
<dbReference type="VEuPathDB" id="AmoebaDB:DDB_G0277677"/>
<dbReference type="eggNOG" id="KOG4392">
    <property type="taxonomic scope" value="Eukaryota"/>
</dbReference>
<dbReference type="HOGENOM" id="CLU_090381_2_2_1"/>
<dbReference type="InParanoid" id="Q86JJ5"/>
<dbReference type="OMA" id="MNAPSRY"/>
<dbReference type="PhylomeDB" id="Q86JJ5"/>
<dbReference type="Reactome" id="R-DDI-113418">
    <property type="pathway name" value="Formation of the Early Elongation Complex"/>
</dbReference>
<dbReference type="Reactome" id="R-DDI-674695">
    <property type="pathway name" value="RNA Polymerase II Pre-transcription Events"/>
</dbReference>
<dbReference type="Reactome" id="R-DDI-6781823">
    <property type="pathway name" value="Formation of TC-NER Pre-Incision Complex"/>
</dbReference>
<dbReference type="Reactome" id="R-DDI-6782135">
    <property type="pathway name" value="Dual incision in TC-NER"/>
</dbReference>
<dbReference type="Reactome" id="R-DDI-6782210">
    <property type="pathway name" value="Gap-filling DNA repair synthesis and ligation in TC-NER"/>
</dbReference>
<dbReference type="Reactome" id="R-DDI-6796648">
    <property type="pathway name" value="TP53 Regulates Transcription of DNA Repair Genes"/>
</dbReference>
<dbReference type="Reactome" id="R-DDI-6807505">
    <property type="pathway name" value="RNA polymerase II transcribes snRNA genes"/>
</dbReference>
<dbReference type="Reactome" id="R-DDI-72086">
    <property type="pathway name" value="mRNA Capping"/>
</dbReference>
<dbReference type="Reactome" id="R-DDI-72163">
    <property type="pathway name" value="mRNA Splicing - Major Pathway"/>
</dbReference>
<dbReference type="Reactome" id="R-DDI-72203">
    <property type="pathway name" value="Processing of Capped Intron-Containing Pre-mRNA"/>
</dbReference>
<dbReference type="Reactome" id="R-DDI-73776">
    <property type="pathway name" value="RNA Polymerase II Promoter Escape"/>
</dbReference>
<dbReference type="Reactome" id="R-DDI-73779">
    <property type="pathway name" value="RNA Polymerase II Transcription Pre-Initiation And Promoter Opening"/>
</dbReference>
<dbReference type="Reactome" id="R-DDI-75953">
    <property type="pathway name" value="RNA Polymerase II Transcription Initiation"/>
</dbReference>
<dbReference type="Reactome" id="R-DDI-76042">
    <property type="pathway name" value="RNA Polymerase II Transcription Initiation And Promoter Clearance"/>
</dbReference>
<dbReference type="Reactome" id="R-DDI-77075">
    <property type="pathway name" value="RNA Pol II CTD phosphorylation and interaction with CE"/>
</dbReference>
<dbReference type="Reactome" id="R-DDI-9018519">
    <property type="pathway name" value="Estrogen-dependent gene expression"/>
</dbReference>
<dbReference type="PRO" id="PR:Q86JJ5"/>
<dbReference type="Proteomes" id="UP000002195">
    <property type="component" value="Chromosome 2"/>
</dbReference>
<dbReference type="GO" id="GO:0005665">
    <property type="term" value="C:RNA polymerase II, core complex"/>
    <property type="evidence" value="ECO:0000250"/>
    <property type="project" value="dictyBase"/>
</dbReference>
<dbReference type="GO" id="GO:0003899">
    <property type="term" value="F:DNA-directed RNA polymerase activity"/>
    <property type="evidence" value="ECO:0007669"/>
    <property type="project" value="InterPro"/>
</dbReference>
<dbReference type="GO" id="GO:0046983">
    <property type="term" value="F:protein dimerization activity"/>
    <property type="evidence" value="ECO:0007669"/>
    <property type="project" value="InterPro"/>
</dbReference>
<dbReference type="GO" id="GO:0006366">
    <property type="term" value="P:transcription by RNA polymerase II"/>
    <property type="evidence" value="ECO:0000250"/>
    <property type="project" value="dictyBase"/>
</dbReference>
<dbReference type="CDD" id="cd06926">
    <property type="entry name" value="RNAP_II_RPB11"/>
    <property type="match status" value="1"/>
</dbReference>
<dbReference type="FunFam" id="3.30.1360.10:FF:000003">
    <property type="entry name" value="DNA-directed RNA polymerase II subunit RPB11"/>
    <property type="match status" value="1"/>
</dbReference>
<dbReference type="Gene3D" id="3.30.1360.10">
    <property type="entry name" value="RNA polymerase, RBP11-like subunit"/>
    <property type="match status" value="1"/>
</dbReference>
<dbReference type="HAMAP" id="MF_00261">
    <property type="entry name" value="RNApol_arch_Rpo11"/>
    <property type="match status" value="1"/>
</dbReference>
<dbReference type="InterPro" id="IPR037685">
    <property type="entry name" value="RBP11"/>
</dbReference>
<dbReference type="InterPro" id="IPR036603">
    <property type="entry name" value="RBP11-like"/>
</dbReference>
<dbReference type="InterPro" id="IPR009025">
    <property type="entry name" value="RBP11-like_dimer"/>
</dbReference>
<dbReference type="InterPro" id="IPR022905">
    <property type="entry name" value="Rpo11-like"/>
</dbReference>
<dbReference type="PANTHER" id="PTHR13946">
    <property type="entry name" value="DNA-DIRECTED RNA POLYMERASE I,II,III"/>
    <property type="match status" value="1"/>
</dbReference>
<dbReference type="PANTHER" id="PTHR13946:SF16">
    <property type="entry name" value="DNA-DIRECTED RNA POLYMERASE II SUBUNIT RPB11"/>
    <property type="match status" value="1"/>
</dbReference>
<dbReference type="Pfam" id="PF13656">
    <property type="entry name" value="RNA_pol_L_2"/>
    <property type="match status" value="1"/>
</dbReference>
<dbReference type="SUPFAM" id="SSF55257">
    <property type="entry name" value="RBP11-like subunits of RNA polymerase"/>
    <property type="match status" value="1"/>
</dbReference>